<name>ENG1_ARTBC</name>
<organism>
    <name type="scientific">Arthroderma benhamiae (strain ATCC MYA-4681 / CBS 112371)</name>
    <name type="common">Trichophyton mentagrophytes</name>
    <dbReference type="NCBI Taxonomy" id="663331"/>
    <lineage>
        <taxon>Eukaryota</taxon>
        <taxon>Fungi</taxon>
        <taxon>Dikarya</taxon>
        <taxon>Ascomycota</taxon>
        <taxon>Pezizomycotina</taxon>
        <taxon>Eurotiomycetes</taxon>
        <taxon>Eurotiomycetidae</taxon>
        <taxon>Onygenales</taxon>
        <taxon>Arthrodermataceae</taxon>
        <taxon>Trichophyton</taxon>
    </lineage>
</organism>
<reference key="1">
    <citation type="journal article" date="2011" name="Genome Biol.">
        <title>Comparative and functional genomics provide insights into the pathogenicity of dermatophytic fungi.</title>
        <authorList>
            <person name="Burmester A."/>
            <person name="Shelest E."/>
            <person name="Gloeckner G."/>
            <person name="Heddergott C."/>
            <person name="Schindler S."/>
            <person name="Staib P."/>
            <person name="Heidel A."/>
            <person name="Felder M."/>
            <person name="Petzold A."/>
            <person name="Szafranski K."/>
            <person name="Feuermann M."/>
            <person name="Pedruzzi I."/>
            <person name="Priebe S."/>
            <person name="Groth M."/>
            <person name="Winkler R."/>
            <person name="Li W."/>
            <person name="Kniemeyer O."/>
            <person name="Schroeckh V."/>
            <person name="Hertweck C."/>
            <person name="Hube B."/>
            <person name="White T.C."/>
            <person name="Platzer M."/>
            <person name="Guthke R."/>
            <person name="Heitman J."/>
            <person name="Woestemeyer J."/>
            <person name="Zipfel P.F."/>
            <person name="Monod M."/>
            <person name="Brakhage A.A."/>
        </authorList>
    </citation>
    <scope>NUCLEOTIDE SEQUENCE [LARGE SCALE GENOMIC DNA]</scope>
    <scope>INDUCTION</scope>
    <source>
        <strain>ATCC MYA-4681 / CBS 112371</strain>
    </source>
</reference>
<reference key="2">
    <citation type="journal article" date="2011" name="Proteomics">
        <title>Identification of novel secreted proteases during extracellular proteolysis by dermatophytes at acidic pH.</title>
        <authorList>
            <person name="Sriranganadane D."/>
            <person name="Waridel P."/>
            <person name="Salamin K."/>
            <person name="Feuermann M."/>
            <person name="Mignon B."/>
            <person name="Staib P."/>
            <person name="Neuhaus J.M."/>
            <person name="Quadroni M."/>
            <person name="Monod M."/>
        </authorList>
    </citation>
    <scope>IDENTIFICATION BY MASS SPECTROMETRY</scope>
    <scope>SUBCELLULAR LOCATION</scope>
</reference>
<accession>D4AZ24</accession>
<evidence type="ECO:0000250" key="1">
    <source>
        <dbReference type="UniProtKB" id="A0A023I7E1"/>
    </source>
</evidence>
<evidence type="ECO:0000250" key="2">
    <source>
        <dbReference type="UniProtKB" id="Q5AIR7"/>
    </source>
</evidence>
<evidence type="ECO:0000255" key="3"/>
<evidence type="ECO:0000255" key="4">
    <source>
        <dbReference type="PROSITE-ProRule" id="PRU00498"/>
    </source>
</evidence>
<evidence type="ECO:0000255" key="5">
    <source>
        <dbReference type="PROSITE-ProRule" id="PRU01352"/>
    </source>
</evidence>
<evidence type="ECO:0000256" key="6">
    <source>
        <dbReference type="SAM" id="MobiDB-lite"/>
    </source>
</evidence>
<evidence type="ECO:0000269" key="7">
    <source>
    </source>
</evidence>
<evidence type="ECO:0000269" key="8">
    <source>
    </source>
</evidence>
<evidence type="ECO:0000305" key="9"/>
<proteinExistence type="evidence at protein level"/>
<dbReference type="EC" id="3.2.1.39" evidence="2"/>
<dbReference type="EMBL" id="ABSU01000019">
    <property type="protein sequence ID" value="EFE31844.1"/>
    <property type="molecule type" value="Genomic_DNA"/>
</dbReference>
<dbReference type="RefSeq" id="XP_003012484.1">
    <property type="nucleotide sequence ID" value="XM_003012438.1"/>
</dbReference>
<dbReference type="SMR" id="D4AZ24"/>
<dbReference type="STRING" id="663331.D4AZ24"/>
<dbReference type="GeneID" id="9520215"/>
<dbReference type="KEGG" id="abe:ARB_01444"/>
<dbReference type="eggNOG" id="KOG2254">
    <property type="taxonomic scope" value="Eukaryota"/>
</dbReference>
<dbReference type="HOGENOM" id="CLU_005482_2_0_1"/>
<dbReference type="OMA" id="DTMFAYA"/>
<dbReference type="Proteomes" id="UP000008866">
    <property type="component" value="Unassembled WGS sequence"/>
</dbReference>
<dbReference type="GO" id="GO:0009986">
    <property type="term" value="C:cell surface"/>
    <property type="evidence" value="ECO:0007669"/>
    <property type="project" value="TreeGrafter"/>
</dbReference>
<dbReference type="GO" id="GO:0005576">
    <property type="term" value="C:extracellular region"/>
    <property type="evidence" value="ECO:0007669"/>
    <property type="project" value="UniProtKB-SubCell"/>
</dbReference>
<dbReference type="GO" id="GO:0052861">
    <property type="term" value="F:endo-1,3(4)-beta-glucanase activity"/>
    <property type="evidence" value="ECO:0007669"/>
    <property type="project" value="UniProtKB-EC"/>
</dbReference>
<dbReference type="GO" id="GO:0042973">
    <property type="term" value="F:glucan endo-1,3-beta-D-glucosidase activity"/>
    <property type="evidence" value="ECO:0007669"/>
    <property type="project" value="TreeGrafter"/>
</dbReference>
<dbReference type="GO" id="GO:0071555">
    <property type="term" value="P:cell wall organization"/>
    <property type="evidence" value="ECO:0007669"/>
    <property type="project" value="UniProtKB-KW"/>
</dbReference>
<dbReference type="GO" id="GO:0000272">
    <property type="term" value="P:polysaccharide catabolic process"/>
    <property type="evidence" value="ECO:0007669"/>
    <property type="project" value="UniProtKB-KW"/>
</dbReference>
<dbReference type="FunFam" id="2.70.98.30:FF:000006">
    <property type="entry name" value="Endo-1,3-beta-glucanase Engl1"/>
    <property type="match status" value="1"/>
</dbReference>
<dbReference type="Gene3D" id="1.10.287.1170">
    <property type="entry name" value="glycoside hydrolase family 81 endo-[beta] glucanase"/>
    <property type="match status" value="1"/>
</dbReference>
<dbReference type="Gene3D" id="2.70.98.30">
    <property type="entry name" value="Golgi alpha-mannosidase II, domain 4"/>
    <property type="match status" value="1"/>
</dbReference>
<dbReference type="Gene3D" id="1.20.5.420">
    <property type="entry name" value="Immunoglobulin FC, subunit C"/>
    <property type="match status" value="1"/>
</dbReference>
<dbReference type="InterPro" id="IPR005200">
    <property type="entry name" value="Endo-beta-glucanase"/>
</dbReference>
<dbReference type="InterPro" id="IPR040720">
    <property type="entry name" value="GH81_C"/>
</dbReference>
<dbReference type="InterPro" id="IPR040451">
    <property type="entry name" value="GH81_N"/>
</dbReference>
<dbReference type="PANTHER" id="PTHR31983">
    <property type="entry name" value="ENDO-1,3(4)-BETA-GLUCANASE 1"/>
    <property type="match status" value="1"/>
</dbReference>
<dbReference type="PANTHER" id="PTHR31983:SF0">
    <property type="entry name" value="GLUCAN ENDO-1,3-BETA-D-GLUCOSIDASE 2"/>
    <property type="match status" value="1"/>
</dbReference>
<dbReference type="Pfam" id="PF17652">
    <property type="entry name" value="Glyco_hydro81C"/>
    <property type="match status" value="1"/>
</dbReference>
<dbReference type="Pfam" id="PF03639">
    <property type="entry name" value="Glyco_hydro_81"/>
    <property type="match status" value="1"/>
</dbReference>
<dbReference type="PROSITE" id="PS52008">
    <property type="entry name" value="GH81"/>
    <property type="match status" value="1"/>
</dbReference>
<comment type="function">
    <text evidence="2">Cleaves internal linkages in 1,3-beta-glucan (By similarity). Probably involved in cell separation after cytokinesis (By similarity).</text>
</comment>
<comment type="catalytic activity">
    <reaction evidence="2">
        <text>Hydrolysis of (1-&gt;3)-beta-D-glucosidic linkages in (1-&gt;3)-beta-D-glucans.</text>
        <dbReference type="EC" id="3.2.1.39"/>
    </reaction>
</comment>
<comment type="subcellular location">
    <subcellularLocation>
        <location evidence="8">Secreted</location>
    </subcellularLocation>
    <subcellularLocation>
        <location evidence="2">Secreted</location>
        <location evidence="2">Cell wall</location>
    </subcellularLocation>
</comment>
<comment type="induction">
    <text evidence="7">Expression is down-regulated in presence of human keratinocytes.</text>
</comment>
<comment type="similarity">
    <text evidence="5 9">Belongs to the glycosyl hydrolase 81 family.</text>
</comment>
<gene>
    <name type="ORF">ARB_01444</name>
</gene>
<sequence length="909" mass="98853">MKPYTTLPGVAVLVSLLTQSAHAAPFPSRADVVHTREQESAARPQPIVYKHERGVSNEIQYLPPDPQGHPTIIPFPTHISYVTFNSRPGAIHPPYPHLDISEASFKAEDSTCWYRGKPCEGVPHIPIVKGFDSIEKRSPAPQRHPPAPTKATAGYQFTNCTSTSNPGPTATSPTSGIPSQPSAPPATMAGQDIFQPIAKDPIPANIKSRDDHPVKANHIENPTGPISTNKFYANFFLGNQTSTTFTHPYTMIWAKGDKNASSFGMAISHVEPSQRATGEPNNKLPGNPVRYYINPVGIKSLVLSASELKESTTMSVAKPQAFSAQAILRPTGGSSESITFPLVQGMGFITAIYNNLQPAIQSAVLFRKVEPAGSPQGGIFKYKITLEDDKNWLLYVIPENGADPKLKLEGNKLISGPTGFKGVIQVAKNPSAEEGEGIYDKSAGSYATDIKISGSVGTDGTGTYKFSFEKAGKGAPLVMYALPHHVESFDDATKNTKKNMKLSTTTKGMATACVGDSWTMVEGNLPLSMDFAPWKPGSSSQVTLSEGAKNAIKAVAGNELSQDMELQTNLNSMYFSGKGLNKFAGAIYTVQELVGDKAAASGPLNSLKESFKRFVDNKQQIPLVYDNVWKGVVSSGTYEKGDTGLDFGNTLYNDHHFHYGYFILTAAILGKLDPAWLDANKAYVNMLVRDSGNSVDNDEHFPFSRAFDWYHGHSWAKGLFESSDGKDQESTSEDTMYAYAIKMWGKTSGDKSMEARGNLMLGILARTLNNYFLMKNDNVNQPKNFIGNKVTGILFENKIDHTTYFGANLEYIQGIHMLPLLPNSAYTRSAEFVKEEWEAMFASGAAAPAEKVTGGWKGVLYANLAIIDPEASWKYFAQPSLDLSSIDGGASRIWYLAYAAGEYSTYIAL</sequence>
<keyword id="KW-0119">Carbohydrate metabolism</keyword>
<keyword id="KW-0134">Cell wall</keyword>
<keyword id="KW-0961">Cell wall biogenesis/degradation</keyword>
<keyword id="KW-0325">Glycoprotein</keyword>
<keyword id="KW-0326">Glycosidase</keyword>
<keyword id="KW-0378">Hydrolase</keyword>
<keyword id="KW-0624">Polysaccharide degradation</keyword>
<keyword id="KW-1185">Reference proteome</keyword>
<keyword id="KW-0964">Secreted</keyword>
<keyword id="KW-0732">Signal</keyword>
<feature type="signal peptide" evidence="3">
    <location>
        <begin position="1"/>
        <end position="23"/>
    </location>
</feature>
<feature type="chain" id="PRO_5003054552" description="Glucan endo-1,3-beta-D-glucosidase ARB_01444">
    <location>
        <begin position="24"/>
        <end position="909"/>
    </location>
</feature>
<feature type="domain" description="GH81" evidence="5">
    <location>
        <begin position="191"/>
        <end position="909"/>
    </location>
</feature>
<feature type="region of interest" description="Disordered" evidence="6">
    <location>
        <begin position="136"/>
        <end position="187"/>
    </location>
</feature>
<feature type="region of interest" description="beta-sandwich subdomain" evidence="5">
    <location>
        <begin position="191"/>
        <end position="430"/>
    </location>
</feature>
<feature type="region of interest" description="alpha/beta subdomain" evidence="5">
    <location>
        <begin position="431"/>
        <end position="524"/>
    </location>
</feature>
<feature type="region of interest" description="(alpha/beta)6 barrel subdomain" evidence="5">
    <location>
        <begin position="539"/>
        <end position="909"/>
    </location>
</feature>
<feature type="region of interest" description="May provide specificity for triple-helical beta-glucan" evidence="1">
    <location>
        <begin position="798"/>
        <end position="800"/>
    </location>
</feature>
<feature type="compositionally biased region" description="Polar residues" evidence="6">
    <location>
        <begin position="155"/>
        <end position="180"/>
    </location>
</feature>
<feature type="active site" evidence="5">
    <location>
        <position position="654"/>
    </location>
</feature>
<feature type="active site" evidence="5">
    <location>
        <position position="729"/>
    </location>
</feature>
<feature type="active site" evidence="5">
    <location>
        <position position="733"/>
    </location>
</feature>
<feature type="binding site" evidence="1">
    <location>
        <position position="658"/>
    </location>
    <ligand>
        <name>(1,3-beta-D-glucosyl)n</name>
        <dbReference type="ChEBI" id="CHEBI:37671"/>
    </ligand>
</feature>
<feature type="binding site" evidence="1">
    <location>
        <position position="727"/>
    </location>
    <ligand>
        <name>(1,3-beta-D-glucosyl)n</name>
        <dbReference type="ChEBI" id="CHEBI:37671"/>
    </ligand>
</feature>
<feature type="binding site" evidence="1">
    <location>
        <position position="729"/>
    </location>
    <ligand>
        <name>(1,3-beta-D-glucosyl)n</name>
        <dbReference type="ChEBI" id="CHEBI:37671"/>
    </ligand>
</feature>
<feature type="binding site" evidence="1">
    <location>
        <position position="733"/>
    </location>
    <ligand>
        <name>(1,3-beta-D-glucosyl)n</name>
        <dbReference type="ChEBI" id="CHEBI:37671"/>
    </ligand>
</feature>
<feature type="binding site" evidence="1">
    <location>
        <position position="811"/>
    </location>
    <ligand>
        <name>(1,3-beta-D-glucosyl)n</name>
        <dbReference type="ChEBI" id="CHEBI:37671"/>
    </ligand>
</feature>
<feature type="glycosylation site" description="N-linked (GlcNAc...) asparagine" evidence="4">
    <location>
        <position position="159"/>
    </location>
</feature>
<feature type="glycosylation site" description="N-linked (GlcNAc...) asparagine" evidence="4">
    <location>
        <position position="239"/>
    </location>
</feature>
<feature type="glycosylation site" description="N-linked (GlcNAc...) asparagine" evidence="4">
    <location>
        <position position="259"/>
    </location>
</feature>
<protein>
    <recommendedName>
        <fullName evidence="9">Glucan endo-1,3-beta-D-glucosidase ARB_01444</fullName>
        <shortName evidence="2">Endo-1,3-beta-glucanase</shortName>
        <ecNumber evidence="2">3.2.1.39</ecNumber>
    </recommendedName>
    <alternativeName>
        <fullName evidence="2">Laminarinase</fullName>
    </alternativeName>
</protein>